<dbReference type="EMBL" id="AY446894">
    <property type="protein sequence ID" value="AAR31586.1"/>
    <property type="molecule type" value="Genomic_DNA"/>
</dbReference>
<dbReference type="RefSeq" id="YP_081480.1">
    <property type="nucleotide sequence ID" value="NC_006273.2"/>
</dbReference>
<dbReference type="BioGRID" id="1678001">
    <property type="interactions" value="3"/>
</dbReference>
<dbReference type="DNASU" id="3077448"/>
<dbReference type="GeneID" id="3077448"/>
<dbReference type="KEGG" id="vg:3077448"/>
<dbReference type="Reactome" id="R-HSA-9609690">
    <property type="pathway name" value="HCMV Early Events"/>
</dbReference>
<dbReference type="Proteomes" id="UP000000938">
    <property type="component" value="Segment"/>
</dbReference>
<dbReference type="GO" id="GO:0030430">
    <property type="term" value="C:host cell cytoplasm"/>
    <property type="evidence" value="ECO:0007669"/>
    <property type="project" value="UniProtKB-SubCell"/>
</dbReference>
<dbReference type="InterPro" id="IPR035112">
    <property type="entry name" value="UL21a"/>
</dbReference>
<dbReference type="Pfam" id="PF17636">
    <property type="entry name" value="UL21a"/>
    <property type="match status" value="1"/>
</dbReference>
<organismHost>
    <name type="scientific">Homo sapiens</name>
    <name type="common">Human</name>
    <dbReference type="NCBI Taxonomy" id="9606"/>
</organismHost>
<gene>
    <name type="primary">UL21A</name>
</gene>
<sequence length="123" mass="14275">MGGSPVPQLTTVTQGLMPSVRMDFRARRPLRRLAFYAPRARRRLFQNHIHPEQRRVLVGEGDEEMLPDLPMEIDIVIDRPPQQPLPNPLVLLLDDVPPHVPGFAPYRVPRPHPMIPEEHWDQF</sequence>
<protein>
    <recommendedName>
        <fullName>Uncharacterized protein UL21A</fullName>
    </recommendedName>
</protein>
<evidence type="ECO:0000250" key="1"/>
<evidence type="ECO:0000305" key="2"/>
<comment type="function">
    <text evidence="1">Required for efficient viral DNA synthesis and the late accumulation of viral IE transcripts.</text>
</comment>
<comment type="subcellular location">
    <subcellularLocation>
        <location evidence="1">Host cytoplasm</location>
    </subcellularLocation>
</comment>
<comment type="similarity">
    <text evidence="2">Belongs to the HHV-5 UL21A protein family.</text>
</comment>
<organism>
    <name type="scientific">Human cytomegalovirus (strain Merlin)</name>
    <name type="common">HHV-5</name>
    <name type="synonym">Human herpesvirus 5</name>
    <dbReference type="NCBI Taxonomy" id="295027"/>
    <lineage>
        <taxon>Viruses</taxon>
        <taxon>Duplodnaviria</taxon>
        <taxon>Heunggongvirae</taxon>
        <taxon>Peploviricota</taxon>
        <taxon>Herviviricetes</taxon>
        <taxon>Herpesvirales</taxon>
        <taxon>Orthoherpesviridae</taxon>
        <taxon>Betaherpesvirinae</taxon>
        <taxon>Cytomegalovirus</taxon>
        <taxon>Cytomegalovirus humanbeta5</taxon>
        <taxon>Human cytomegalovirus</taxon>
    </lineage>
</organism>
<proteinExistence type="inferred from homology"/>
<feature type="chain" id="PRO_0000418279" description="Uncharacterized protein UL21A">
    <location>
        <begin position="1"/>
        <end position="123"/>
    </location>
</feature>
<name>UL21A_HCMVM</name>
<keyword id="KW-1035">Host cytoplasm</keyword>
<keyword id="KW-1185">Reference proteome</keyword>
<reference key="1">
    <citation type="journal article" date="2004" name="J. Gen. Virol.">
        <title>Genetic content of wild-type human cytomegalovirus.</title>
        <authorList>
            <person name="Dolan A."/>
            <person name="Cunningham C."/>
            <person name="Hector R.D."/>
            <person name="Hassan-Walker A.F."/>
            <person name="Lee L."/>
            <person name="Addison C."/>
            <person name="Dargan D.J."/>
            <person name="McGeoch D.J."/>
            <person name="Gatherer D."/>
            <person name="Emery V.C."/>
            <person name="Griffiths P.D."/>
            <person name="Sinzger C."/>
            <person name="McSharry B.P."/>
            <person name="Wilkinson G.W.G."/>
            <person name="Davison A.J."/>
        </authorList>
    </citation>
    <scope>NUCLEOTIDE SEQUENCE [LARGE SCALE GENOMIC DNA]</scope>
</reference>
<accession>F5HH39</accession>